<sequence>MAIDAATVRKVARLARIATPEERLEPLAQELNGIMTWIEQLAEVDTDGCEPLTSVVAAGLPLREDVVTMGGDPARVTSNAPKSINNFFVVPKVVE</sequence>
<feature type="chain" id="PRO_1000122558" description="Aspartyl/glutamyl-tRNA(Asn/Gln) amidotransferase subunit C">
    <location>
        <begin position="1"/>
        <end position="95"/>
    </location>
</feature>
<proteinExistence type="inferred from homology"/>
<name>GATC_CAUVN</name>
<gene>
    <name evidence="1" type="primary">gatC</name>
    <name type="ordered locus">CCNA_02520</name>
</gene>
<accession>B8GZJ6</accession>
<organism>
    <name type="scientific">Caulobacter vibrioides (strain NA1000 / CB15N)</name>
    <name type="common">Caulobacter crescentus</name>
    <dbReference type="NCBI Taxonomy" id="565050"/>
    <lineage>
        <taxon>Bacteria</taxon>
        <taxon>Pseudomonadati</taxon>
        <taxon>Pseudomonadota</taxon>
        <taxon>Alphaproteobacteria</taxon>
        <taxon>Caulobacterales</taxon>
        <taxon>Caulobacteraceae</taxon>
        <taxon>Caulobacter</taxon>
    </lineage>
</organism>
<protein>
    <recommendedName>
        <fullName evidence="1">Aspartyl/glutamyl-tRNA(Asn/Gln) amidotransferase subunit C</fullName>
        <shortName evidence="1">Asp/Glu-ADT subunit C</shortName>
        <ecNumber evidence="1">6.3.5.-</ecNumber>
    </recommendedName>
</protein>
<comment type="function">
    <text evidence="1">Allows the formation of correctly charged Asn-tRNA(Asn) or Gln-tRNA(Gln) through the transamidation of misacylated Asp-tRNA(Asn) or Glu-tRNA(Gln) in organisms which lack either or both of asparaginyl-tRNA or glutaminyl-tRNA synthetases. The reaction takes place in the presence of glutamine and ATP through an activated phospho-Asp-tRNA(Asn) or phospho-Glu-tRNA(Gln).</text>
</comment>
<comment type="catalytic activity">
    <reaction evidence="1">
        <text>L-glutamyl-tRNA(Gln) + L-glutamine + ATP + H2O = L-glutaminyl-tRNA(Gln) + L-glutamate + ADP + phosphate + H(+)</text>
        <dbReference type="Rhea" id="RHEA:17521"/>
        <dbReference type="Rhea" id="RHEA-COMP:9681"/>
        <dbReference type="Rhea" id="RHEA-COMP:9684"/>
        <dbReference type="ChEBI" id="CHEBI:15377"/>
        <dbReference type="ChEBI" id="CHEBI:15378"/>
        <dbReference type="ChEBI" id="CHEBI:29985"/>
        <dbReference type="ChEBI" id="CHEBI:30616"/>
        <dbReference type="ChEBI" id="CHEBI:43474"/>
        <dbReference type="ChEBI" id="CHEBI:58359"/>
        <dbReference type="ChEBI" id="CHEBI:78520"/>
        <dbReference type="ChEBI" id="CHEBI:78521"/>
        <dbReference type="ChEBI" id="CHEBI:456216"/>
    </reaction>
</comment>
<comment type="catalytic activity">
    <reaction evidence="1">
        <text>L-aspartyl-tRNA(Asn) + L-glutamine + ATP + H2O = L-asparaginyl-tRNA(Asn) + L-glutamate + ADP + phosphate + 2 H(+)</text>
        <dbReference type="Rhea" id="RHEA:14513"/>
        <dbReference type="Rhea" id="RHEA-COMP:9674"/>
        <dbReference type="Rhea" id="RHEA-COMP:9677"/>
        <dbReference type="ChEBI" id="CHEBI:15377"/>
        <dbReference type="ChEBI" id="CHEBI:15378"/>
        <dbReference type="ChEBI" id="CHEBI:29985"/>
        <dbReference type="ChEBI" id="CHEBI:30616"/>
        <dbReference type="ChEBI" id="CHEBI:43474"/>
        <dbReference type="ChEBI" id="CHEBI:58359"/>
        <dbReference type="ChEBI" id="CHEBI:78515"/>
        <dbReference type="ChEBI" id="CHEBI:78516"/>
        <dbReference type="ChEBI" id="CHEBI:456216"/>
    </reaction>
</comment>
<comment type="subunit">
    <text evidence="1">Heterotrimer of A, B and C subunits.</text>
</comment>
<comment type="similarity">
    <text evidence="1">Belongs to the GatC family.</text>
</comment>
<keyword id="KW-0067">ATP-binding</keyword>
<keyword id="KW-0436">Ligase</keyword>
<keyword id="KW-0547">Nucleotide-binding</keyword>
<keyword id="KW-0648">Protein biosynthesis</keyword>
<keyword id="KW-1185">Reference proteome</keyword>
<evidence type="ECO:0000255" key="1">
    <source>
        <dbReference type="HAMAP-Rule" id="MF_00122"/>
    </source>
</evidence>
<dbReference type="EC" id="6.3.5.-" evidence="1"/>
<dbReference type="EMBL" id="CP001340">
    <property type="protein sequence ID" value="ACL95985.1"/>
    <property type="molecule type" value="Genomic_DNA"/>
</dbReference>
<dbReference type="RefSeq" id="WP_010920296.1">
    <property type="nucleotide sequence ID" value="NC_011916.1"/>
</dbReference>
<dbReference type="RefSeq" id="YP_002517893.1">
    <property type="nucleotide sequence ID" value="NC_011916.1"/>
</dbReference>
<dbReference type="SMR" id="B8GZJ6"/>
<dbReference type="GeneID" id="7330673"/>
<dbReference type="KEGG" id="ccs:CCNA_02520"/>
<dbReference type="PATRIC" id="fig|565050.3.peg.2473"/>
<dbReference type="HOGENOM" id="CLU_105899_2_0_5"/>
<dbReference type="OrthoDB" id="9794326at2"/>
<dbReference type="PhylomeDB" id="B8GZJ6"/>
<dbReference type="Proteomes" id="UP000001364">
    <property type="component" value="Chromosome"/>
</dbReference>
<dbReference type="GO" id="GO:0050566">
    <property type="term" value="F:asparaginyl-tRNA synthase (glutamine-hydrolyzing) activity"/>
    <property type="evidence" value="ECO:0007669"/>
    <property type="project" value="RHEA"/>
</dbReference>
<dbReference type="GO" id="GO:0005524">
    <property type="term" value="F:ATP binding"/>
    <property type="evidence" value="ECO:0007669"/>
    <property type="project" value="UniProtKB-KW"/>
</dbReference>
<dbReference type="GO" id="GO:0050567">
    <property type="term" value="F:glutaminyl-tRNA synthase (glutamine-hydrolyzing) activity"/>
    <property type="evidence" value="ECO:0007669"/>
    <property type="project" value="UniProtKB-UniRule"/>
</dbReference>
<dbReference type="GO" id="GO:0070681">
    <property type="term" value="P:glutaminyl-tRNAGln biosynthesis via transamidation"/>
    <property type="evidence" value="ECO:0007669"/>
    <property type="project" value="TreeGrafter"/>
</dbReference>
<dbReference type="GO" id="GO:0006450">
    <property type="term" value="P:regulation of translational fidelity"/>
    <property type="evidence" value="ECO:0007669"/>
    <property type="project" value="InterPro"/>
</dbReference>
<dbReference type="GO" id="GO:0006412">
    <property type="term" value="P:translation"/>
    <property type="evidence" value="ECO:0007669"/>
    <property type="project" value="UniProtKB-UniRule"/>
</dbReference>
<dbReference type="Gene3D" id="1.10.20.60">
    <property type="entry name" value="Glu-tRNAGln amidotransferase C subunit, N-terminal domain"/>
    <property type="match status" value="1"/>
</dbReference>
<dbReference type="HAMAP" id="MF_00122">
    <property type="entry name" value="GatC"/>
    <property type="match status" value="1"/>
</dbReference>
<dbReference type="InterPro" id="IPR036113">
    <property type="entry name" value="Asp/Glu-ADT_sf_sub_c"/>
</dbReference>
<dbReference type="InterPro" id="IPR003837">
    <property type="entry name" value="GatC"/>
</dbReference>
<dbReference type="NCBIfam" id="TIGR00135">
    <property type="entry name" value="gatC"/>
    <property type="match status" value="1"/>
</dbReference>
<dbReference type="PANTHER" id="PTHR15004">
    <property type="entry name" value="GLUTAMYL-TRNA(GLN) AMIDOTRANSFERASE SUBUNIT C, MITOCHONDRIAL"/>
    <property type="match status" value="1"/>
</dbReference>
<dbReference type="PANTHER" id="PTHR15004:SF0">
    <property type="entry name" value="GLUTAMYL-TRNA(GLN) AMIDOTRANSFERASE SUBUNIT C, MITOCHONDRIAL"/>
    <property type="match status" value="1"/>
</dbReference>
<dbReference type="Pfam" id="PF02686">
    <property type="entry name" value="GatC"/>
    <property type="match status" value="1"/>
</dbReference>
<dbReference type="SUPFAM" id="SSF141000">
    <property type="entry name" value="Glu-tRNAGln amidotransferase C subunit"/>
    <property type="match status" value="1"/>
</dbReference>
<reference key="1">
    <citation type="journal article" date="2010" name="J. Bacteriol.">
        <title>The genetic basis of laboratory adaptation in Caulobacter crescentus.</title>
        <authorList>
            <person name="Marks M.E."/>
            <person name="Castro-Rojas C.M."/>
            <person name="Teiling C."/>
            <person name="Du L."/>
            <person name="Kapatral V."/>
            <person name="Walunas T.L."/>
            <person name="Crosson S."/>
        </authorList>
    </citation>
    <scope>NUCLEOTIDE SEQUENCE [LARGE SCALE GENOMIC DNA]</scope>
    <source>
        <strain>NA1000 / CB15N</strain>
    </source>
</reference>